<dbReference type="EC" id="3.4.24.70"/>
<dbReference type="EMBL" id="M84574">
    <property type="protein sequence ID" value="AAA27172.1"/>
    <property type="molecule type" value="Genomic_DNA"/>
</dbReference>
<dbReference type="EMBL" id="AE006468">
    <property type="protein sequence ID" value="AAL22454.1"/>
    <property type="molecule type" value="Genomic_DNA"/>
</dbReference>
<dbReference type="PIR" id="A42298">
    <property type="entry name" value="A42298"/>
</dbReference>
<dbReference type="RefSeq" id="NP_462495.1">
    <property type="nucleotide sequence ID" value="NC_003197.2"/>
</dbReference>
<dbReference type="RefSeq" id="WP_000184178.1">
    <property type="nucleotide sequence ID" value="NC_003197.2"/>
</dbReference>
<dbReference type="SMR" id="P27237"/>
<dbReference type="STRING" id="99287.STM3594"/>
<dbReference type="MEROPS" id="M03.004"/>
<dbReference type="PaxDb" id="99287-STM3594"/>
<dbReference type="GeneID" id="1255117"/>
<dbReference type="KEGG" id="stm:STM3594"/>
<dbReference type="PATRIC" id="fig|99287.12.peg.3798"/>
<dbReference type="HOGENOM" id="CLU_001805_4_1_6"/>
<dbReference type="OMA" id="KNFQSAM"/>
<dbReference type="PhylomeDB" id="P27237"/>
<dbReference type="BioCyc" id="SENT99287:STM3594-MONOMER"/>
<dbReference type="Proteomes" id="UP000001014">
    <property type="component" value="Chromosome"/>
</dbReference>
<dbReference type="GO" id="GO:0046872">
    <property type="term" value="F:metal ion binding"/>
    <property type="evidence" value="ECO:0007669"/>
    <property type="project" value="UniProtKB-KW"/>
</dbReference>
<dbReference type="GO" id="GO:0004222">
    <property type="term" value="F:metalloendopeptidase activity"/>
    <property type="evidence" value="ECO:0000318"/>
    <property type="project" value="GO_Central"/>
</dbReference>
<dbReference type="GO" id="GO:0006518">
    <property type="term" value="P:peptide metabolic process"/>
    <property type="evidence" value="ECO:0000318"/>
    <property type="project" value="GO_Central"/>
</dbReference>
<dbReference type="GO" id="GO:0006508">
    <property type="term" value="P:proteolysis"/>
    <property type="evidence" value="ECO:0000318"/>
    <property type="project" value="GO_Central"/>
</dbReference>
<dbReference type="CDD" id="cd06456">
    <property type="entry name" value="M3A_DCP"/>
    <property type="match status" value="1"/>
</dbReference>
<dbReference type="FunFam" id="3.40.390.10:FF:000009">
    <property type="entry name" value="Oligopeptidase A"/>
    <property type="match status" value="1"/>
</dbReference>
<dbReference type="Gene3D" id="3.40.390.10">
    <property type="entry name" value="Collagenase (Catalytic Domain)"/>
    <property type="match status" value="1"/>
</dbReference>
<dbReference type="Gene3D" id="1.20.1050.40">
    <property type="entry name" value="Endopeptidase. Chain P, domain 1"/>
    <property type="match status" value="1"/>
</dbReference>
<dbReference type="Gene3D" id="1.10.1370.10">
    <property type="entry name" value="Neurolysin, domain 3"/>
    <property type="match status" value="1"/>
</dbReference>
<dbReference type="InterPro" id="IPR034005">
    <property type="entry name" value="M3A_DCP"/>
</dbReference>
<dbReference type="InterPro" id="IPR024079">
    <property type="entry name" value="MetalloPept_cat_dom_sf"/>
</dbReference>
<dbReference type="InterPro" id="IPR024077">
    <property type="entry name" value="Neurolysin/TOP_dom2"/>
</dbReference>
<dbReference type="InterPro" id="IPR024080">
    <property type="entry name" value="Neurolysin/TOP_N"/>
</dbReference>
<dbReference type="InterPro" id="IPR045666">
    <property type="entry name" value="OpdA_N"/>
</dbReference>
<dbReference type="InterPro" id="IPR045090">
    <property type="entry name" value="Pept_M3A_M3B"/>
</dbReference>
<dbReference type="InterPro" id="IPR001567">
    <property type="entry name" value="Pept_M3A_M3B_dom"/>
</dbReference>
<dbReference type="NCBIfam" id="NF008159">
    <property type="entry name" value="PRK10911.1"/>
    <property type="match status" value="1"/>
</dbReference>
<dbReference type="PANTHER" id="PTHR11804">
    <property type="entry name" value="PROTEASE M3 THIMET OLIGOPEPTIDASE-RELATED"/>
    <property type="match status" value="1"/>
</dbReference>
<dbReference type="PANTHER" id="PTHR11804:SF84">
    <property type="entry name" value="SACCHAROLYSIN"/>
    <property type="match status" value="1"/>
</dbReference>
<dbReference type="Pfam" id="PF01432">
    <property type="entry name" value="Peptidase_M3"/>
    <property type="match status" value="1"/>
</dbReference>
<dbReference type="Pfam" id="PF19310">
    <property type="entry name" value="TOP_N"/>
    <property type="match status" value="1"/>
</dbReference>
<dbReference type="SUPFAM" id="SSF55486">
    <property type="entry name" value="Metalloproteases ('zincins'), catalytic domain"/>
    <property type="match status" value="1"/>
</dbReference>
<dbReference type="PROSITE" id="PS00142">
    <property type="entry name" value="ZINC_PROTEASE"/>
    <property type="match status" value="1"/>
</dbReference>
<reference key="1">
    <citation type="journal article" date="1992" name="J. Bacteriol.">
        <title>Cloning and nucleotide sequence of opdA, the gene encoding oligopeptidase A in Salmonella typhimurium.</title>
        <authorList>
            <person name="Conlin C.A."/>
            <person name="Miller C.G."/>
        </authorList>
    </citation>
    <scope>NUCLEOTIDE SEQUENCE [GENOMIC DNA]</scope>
    <scope>PROTEIN SEQUENCE OF 1-18</scope>
</reference>
<reference key="2">
    <citation type="journal article" date="2001" name="Nature">
        <title>Complete genome sequence of Salmonella enterica serovar Typhimurium LT2.</title>
        <authorList>
            <person name="McClelland M."/>
            <person name="Sanderson K.E."/>
            <person name="Spieth J."/>
            <person name="Clifton S.W."/>
            <person name="Latreille P."/>
            <person name="Courtney L."/>
            <person name="Porwollik S."/>
            <person name="Ali J."/>
            <person name="Dante M."/>
            <person name="Du F."/>
            <person name="Hou S."/>
            <person name="Layman D."/>
            <person name="Leonard S."/>
            <person name="Nguyen C."/>
            <person name="Scott K."/>
            <person name="Holmes A."/>
            <person name="Grewal N."/>
            <person name="Mulvaney E."/>
            <person name="Ryan E."/>
            <person name="Sun H."/>
            <person name="Florea L."/>
            <person name="Miller W."/>
            <person name="Stoneking T."/>
            <person name="Nhan M."/>
            <person name="Waterston R."/>
            <person name="Wilson R.K."/>
        </authorList>
    </citation>
    <scope>NUCLEOTIDE SEQUENCE [LARGE SCALE GENOMIC DNA]</scope>
    <source>
        <strain>LT2 / SGSC1412 / ATCC 700720</strain>
    </source>
</reference>
<organism>
    <name type="scientific">Salmonella typhimurium (strain LT2 / SGSC1412 / ATCC 700720)</name>
    <dbReference type="NCBI Taxonomy" id="99287"/>
    <lineage>
        <taxon>Bacteria</taxon>
        <taxon>Pseudomonadati</taxon>
        <taxon>Pseudomonadota</taxon>
        <taxon>Gammaproteobacteria</taxon>
        <taxon>Enterobacterales</taxon>
        <taxon>Enterobacteriaceae</taxon>
        <taxon>Salmonella</taxon>
    </lineage>
</organism>
<sequence length="680" mass="76944">MTNPLLTSFSLPPFSAIKPEHVVPAVTKALADCRAAVEGVVAHGAPYSWENLCQPLAEADDVLGRIFSPISHLNSVKNSPELREAYEQTLPLLSEYSTWVGQHEGLYNAYRDLRDGDHYATLNTAQKKAVDNALRDFELSGIGLPKEKQQRYGEIATRLSELGNQYSNNVLDATMGWTKLITDEAELAGMPESALAAAKAQAEAKEQEGYLLTLDIPSYLPVMTYCDNQALREEMYRAYSTRASDQGPNAGKWDNSPVMEEILALRHELAQLLGFENYAHESLATKMAENPQQVLDFLTDLAKRARPQGEKELAQLRAFAKAEFGVEELQPWDIAYYSEKQKQHLYSISDEQLRPYFPENKAVNGLFEVVKRIYGITAKERTDVDVWHPEVRFFELYDENNELRGSFYLDLYAREHKRGGAWMDDCVGQMRKADGTLQKPVAYLTCNFNRPVNGKPALFTHDEVITLFHEFGHGLHHMLTRIETAGVSGISGVPWDAVELPSQFMENWCWEPEALAFISGHYETGEPLPKELLDKMLAAKNYQAALFILRQLEFGLFDFRLHAEFNPQQGAKILETLFEIKKQVAVVPSPTWGRFPHAFSHIFAGGYAAGYYSYLWADVLAADAYSRFEEEGIFNRETGQSFLDNILTRGGSEEPMELFKRFRGREPQLDAMLEHYGIKG</sequence>
<feature type="chain" id="PRO_0000078160" description="Oligopeptidase A">
    <location>
        <begin position="1"/>
        <end position="680"/>
    </location>
</feature>
<feature type="active site" evidence="2">
    <location>
        <position position="470"/>
    </location>
</feature>
<feature type="binding site" evidence="2">
    <location>
        <position position="469"/>
    </location>
    <ligand>
        <name>Zn(2+)</name>
        <dbReference type="ChEBI" id="CHEBI:29105"/>
        <note>catalytic</note>
    </ligand>
</feature>
<feature type="binding site" evidence="2">
    <location>
        <position position="473"/>
    </location>
    <ligand>
        <name>Zn(2+)</name>
        <dbReference type="ChEBI" id="CHEBI:29105"/>
        <note>catalytic</note>
    </ligand>
</feature>
<feature type="binding site" evidence="2">
    <location>
        <position position="476"/>
    </location>
    <ligand>
        <name>Zn(2+)</name>
        <dbReference type="ChEBI" id="CHEBI:29105"/>
        <note>catalytic</note>
    </ligand>
</feature>
<keyword id="KW-0903">Direct protein sequencing</keyword>
<keyword id="KW-0378">Hydrolase</keyword>
<keyword id="KW-0479">Metal-binding</keyword>
<keyword id="KW-0482">Metalloprotease</keyword>
<keyword id="KW-0645">Protease</keyword>
<keyword id="KW-1185">Reference proteome</keyword>
<keyword id="KW-0862">Zinc</keyword>
<evidence type="ECO:0000250" key="1"/>
<evidence type="ECO:0000255" key="2">
    <source>
        <dbReference type="PROSITE-ProRule" id="PRU10095"/>
    </source>
</evidence>
<evidence type="ECO:0000305" key="3"/>
<accession>P27237</accession>
<gene>
    <name type="primary">prlC</name>
    <name type="synonym">opdA</name>
    <name type="synonym">optA</name>
    <name type="ordered locus">STM3594</name>
</gene>
<comment type="function">
    <text>May play a specific role in the degradation of signal peptides after they are released from precursor forms of secreted proteins. Can cleave N-acetyl-L-Ala(4).</text>
</comment>
<comment type="catalytic activity">
    <reaction>
        <text>Hydrolysis of oligopeptides, with broad specificity. Gly or Ala commonly occur as P1 or P1' residues, but more distant residues are also important, as is shown by the fact that Z-Gly-Pro-Gly-|-Gly-Pro-Ala is cleaved, but not Z-(Gly)(5).</text>
        <dbReference type="EC" id="3.4.24.70"/>
    </reaction>
</comment>
<comment type="cofactor">
    <cofactor evidence="1">
        <name>Zn(2+)</name>
        <dbReference type="ChEBI" id="CHEBI:29105"/>
    </cofactor>
    <text evidence="1">Binds 1 zinc ion.</text>
</comment>
<comment type="similarity">
    <text evidence="3">Belongs to the peptidase M3 family.</text>
</comment>
<protein>
    <recommendedName>
        <fullName>Oligopeptidase A</fullName>
        <ecNumber>3.4.24.70</ecNumber>
    </recommendedName>
</protein>
<proteinExistence type="evidence at protein level"/>
<name>OPDA_SALTY</name>